<dbReference type="EC" id="2.5.1.18"/>
<dbReference type="EMBL" id="X56012">
    <property type="protein sequence ID" value="CAA39487.1"/>
    <property type="molecule type" value="Genomic_DNA"/>
</dbReference>
<dbReference type="PIR" id="T06509">
    <property type="entry name" value="T06509"/>
</dbReference>
<dbReference type="SMR" id="P30110"/>
<dbReference type="STRING" id="4565.P30110"/>
<dbReference type="PaxDb" id="4565-Traes_4BS_615DE1514.1"/>
<dbReference type="eggNOG" id="KOG0867">
    <property type="taxonomic scope" value="Eukaryota"/>
</dbReference>
<dbReference type="BRENDA" id="2.5.1.18">
    <property type="organism ID" value="6500"/>
</dbReference>
<dbReference type="Proteomes" id="UP000019116">
    <property type="component" value="Unplaced"/>
</dbReference>
<dbReference type="ExpressionAtlas" id="P30110">
    <property type="expression patterns" value="baseline and differential"/>
</dbReference>
<dbReference type="GO" id="GO:0005737">
    <property type="term" value="C:cytoplasm"/>
    <property type="evidence" value="ECO:0000318"/>
    <property type="project" value="GO_Central"/>
</dbReference>
<dbReference type="GO" id="GO:0043295">
    <property type="term" value="F:glutathione binding"/>
    <property type="evidence" value="ECO:0000318"/>
    <property type="project" value="GO_Central"/>
</dbReference>
<dbReference type="GO" id="GO:0004364">
    <property type="term" value="F:glutathione transferase activity"/>
    <property type="evidence" value="ECO:0000318"/>
    <property type="project" value="GO_Central"/>
</dbReference>
<dbReference type="GO" id="GO:0006749">
    <property type="term" value="P:glutathione metabolic process"/>
    <property type="evidence" value="ECO:0000318"/>
    <property type="project" value="GO_Central"/>
</dbReference>
<dbReference type="GO" id="GO:0009636">
    <property type="term" value="P:response to toxic substance"/>
    <property type="evidence" value="ECO:0007669"/>
    <property type="project" value="UniProtKB-ARBA"/>
</dbReference>
<dbReference type="CDD" id="cd03187">
    <property type="entry name" value="GST_C_Phi"/>
    <property type="match status" value="1"/>
</dbReference>
<dbReference type="CDD" id="cd03053">
    <property type="entry name" value="GST_N_Phi"/>
    <property type="match status" value="1"/>
</dbReference>
<dbReference type="FunFam" id="1.20.1050.10:FF:000004">
    <property type="entry name" value="Glutathione S-transferase F2"/>
    <property type="match status" value="1"/>
</dbReference>
<dbReference type="FunFam" id="3.40.30.10:FF:000016">
    <property type="entry name" value="Glutathione S-transferase F2"/>
    <property type="match status" value="1"/>
</dbReference>
<dbReference type="Gene3D" id="1.20.1050.10">
    <property type="match status" value="1"/>
</dbReference>
<dbReference type="Gene3D" id="3.40.30.10">
    <property type="entry name" value="Glutaredoxin"/>
    <property type="match status" value="1"/>
</dbReference>
<dbReference type="InterPro" id="IPR010987">
    <property type="entry name" value="Glutathione-S-Trfase_C-like"/>
</dbReference>
<dbReference type="InterPro" id="IPR036282">
    <property type="entry name" value="Glutathione-S-Trfase_C_sf"/>
</dbReference>
<dbReference type="InterPro" id="IPR040079">
    <property type="entry name" value="Glutathione_S-Trfase"/>
</dbReference>
<dbReference type="InterPro" id="IPR004045">
    <property type="entry name" value="Glutathione_S-Trfase_N"/>
</dbReference>
<dbReference type="InterPro" id="IPR004046">
    <property type="entry name" value="GST_C"/>
</dbReference>
<dbReference type="InterPro" id="IPR034347">
    <property type="entry name" value="GST_Phi_C"/>
</dbReference>
<dbReference type="InterPro" id="IPR036249">
    <property type="entry name" value="Thioredoxin-like_sf"/>
</dbReference>
<dbReference type="PANTHER" id="PTHR43900:SF76">
    <property type="entry name" value="GLUTATHIONE S-TRANSFERASE 1"/>
    <property type="match status" value="1"/>
</dbReference>
<dbReference type="PANTHER" id="PTHR43900">
    <property type="entry name" value="GLUTATHIONE S-TRANSFERASE RHO"/>
    <property type="match status" value="1"/>
</dbReference>
<dbReference type="Pfam" id="PF00043">
    <property type="entry name" value="GST_C"/>
    <property type="match status" value="1"/>
</dbReference>
<dbReference type="Pfam" id="PF02798">
    <property type="entry name" value="GST_N"/>
    <property type="match status" value="1"/>
</dbReference>
<dbReference type="SFLD" id="SFLDS00019">
    <property type="entry name" value="Glutathione_Transferase_(cytos"/>
    <property type="match status" value="1"/>
</dbReference>
<dbReference type="SFLD" id="SFLDG00358">
    <property type="entry name" value="Main_(cytGST)"/>
    <property type="match status" value="1"/>
</dbReference>
<dbReference type="SUPFAM" id="SSF47616">
    <property type="entry name" value="GST C-terminal domain-like"/>
    <property type="match status" value="1"/>
</dbReference>
<dbReference type="SUPFAM" id="SSF52833">
    <property type="entry name" value="Thioredoxin-like"/>
    <property type="match status" value="1"/>
</dbReference>
<dbReference type="PROSITE" id="PS50405">
    <property type="entry name" value="GST_CTER"/>
    <property type="match status" value="1"/>
</dbReference>
<dbReference type="PROSITE" id="PS50404">
    <property type="entry name" value="GST_NTER"/>
    <property type="match status" value="1"/>
</dbReference>
<accession>P30110</accession>
<gene>
    <name type="primary">GSTA1</name>
</gene>
<comment type="function">
    <text>Conjugation of reduced glutathione to a wide number of exogenous and endogenous hydrophobic electrophiles.</text>
</comment>
<comment type="catalytic activity">
    <reaction>
        <text>RX + glutathione = an S-substituted glutathione + a halide anion + H(+)</text>
        <dbReference type="Rhea" id="RHEA:16437"/>
        <dbReference type="ChEBI" id="CHEBI:15378"/>
        <dbReference type="ChEBI" id="CHEBI:16042"/>
        <dbReference type="ChEBI" id="CHEBI:17792"/>
        <dbReference type="ChEBI" id="CHEBI:57925"/>
        <dbReference type="ChEBI" id="CHEBI:90779"/>
        <dbReference type="EC" id="2.5.1.18"/>
    </reaction>
</comment>
<comment type="induction">
    <text>By pathogen infection.</text>
</comment>
<comment type="similarity">
    <text evidence="2">Belongs to the GST superfamily. Phi family.</text>
</comment>
<reference key="1">
    <citation type="journal article" date="1991" name="Mol. Plant Microbe Interact.">
        <title>A pathogen-induced wheat gene encodes a protein homologous to glutathione-S-transferases.</title>
        <authorList>
            <person name="Dudler R."/>
            <person name="Hertig C."/>
            <person name="Rebmann G."/>
            <person name="Bull J."/>
            <person name="Mauch F."/>
        </authorList>
    </citation>
    <scope>NUCLEOTIDE SEQUENCE [GENOMIC DNA]</scope>
    <source>
        <strain>cv. Cheyenne</strain>
    </source>
</reference>
<proteinExistence type="evidence at transcript level"/>
<organism>
    <name type="scientific">Triticum aestivum</name>
    <name type="common">Wheat</name>
    <dbReference type="NCBI Taxonomy" id="4565"/>
    <lineage>
        <taxon>Eukaryota</taxon>
        <taxon>Viridiplantae</taxon>
        <taxon>Streptophyta</taxon>
        <taxon>Embryophyta</taxon>
        <taxon>Tracheophyta</taxon>
        <taxon>Spermatophyta</taxon>
        <taxon>Magnoliopsida</taxon>
        <taxon>Liliopsida</taxon>
        <taxon>Poales</taxon>
        <taxon>Poaceae</taxon>
        <taxon>BOP clade</taxon>
        <taxon>Pooideae</taxon>
        <taxon>Triticodae</taxon>
        <taxon>Triticeae</taxon>
        <taxon>Triticinae</taxon>
        <taxon>Triticum</taxon>
    </lineage>
</organism>
<protein>
    <recommendedName>
        <fullName>Glutathione S-transferase 1</fullName>
        <ecNumber>2.5.1.18</ecNumber>
    </recommendedName>
    <alternativeName>
        <fullName>GST class-phi</fullName>
    </alternativeName>
</protein>
<evidence type="ECO:0000250" key="1"/>
<evidence type="ECO:0000305" key="2"/>
<name>GSTF1_WHEAT</name>
<feature type="chain" id="PRO_0000185858" description="Glutathione S-transferase 1">
    <location>
        <begin position="1"/>
        <end position="229"/>
    </location>
</feature>
<feature type="domain" description="GST N-terminal">
    <location>
        <begin position="2"/>
        <end position="83"/>
    </location>
</feature>
<feature type="domain" description="GST C-terminal">
    <location>
        <begin position="93"/>
        <end position="223"/>
    </location>
</feature>
<feature type="binding site" evidence="1">
    <location>
        <begin position="41"/>
        <end position="42"/>
    </location>
    <ligand>
        <name>glutathione</name>
        <dbReference type="ChEBI" id="CHEBI:57925"/>
    </ligand>
</feature>
<feature type="binding site" evidence="1">
    <location>
        <begin position="54"/>
        <end position="55"/>
    </location>
    <ligand>
        <name>glutathione</name>
        <dbReference type="ChEBI" id="CHEBI:57925"/>
    </ligand>
</feature>
<feature type="binding site" evidence="1">
    <location>
        <begin position="67"/>
        <end position="68"/>
    </location>
    <ligand>
        <name>glutathione</name>
        <dbReference type="ChEBI" id="CHEBI:57925"/>
    </ligand>
</feature>
<feature type="sequence variant">
    <original>M</original>
    <variation>V</variation>
    <location>
        <position position="34"/>
    </location>
</feature>
<feature type="sequence variant" description="In strain: cv. Fidel.">
    <original>T</original>
    <variation>S</variation>
    <location>
        <position position="171"/>
    </location>
</feature>
<feature type="sequence variant" description="In strain: cv. Fidel.">
    <original>D</original>
    <variation>E</variation>
    <location>
        <position position="195"/>
    </location>
</feature>
<feature type="sequence variant" description="In strain: cv. Fidel.">
    <original>G</original>
    <variation>R</variation>
    <location>
        <position position="226"/>
    </location>
</feature>
<sequence length="229" mass="25828">MSPVKVFGHPMLTNVARVLLFLEEVGAEYELVPMDFVAGEHKRPQHVQLNPFAKMPGFQDGDLVLFESRAIAKYILRKYGGTAGLDLLGENSGIEELAMVDVWTEVEAQQYYPAISPVVFECIIIPFIIPGGGAAPNQTVVDESLERLRGVLGIYEARLEKSRYLAGDSITFADLNHIPFTFYFMTTPYAKVFDDYPKVKAWWEMLMARPAVQRVCKHMPTEFKLGAQY</sequence>
<keyword id="KW-1185">Reference proteome</keyword>
<keyword id="KW-0808">Transferase</keyword>